<sequence length="617" mass="69699">MAELETGAVPIREEFLVKQDGNKKRKRKERGQNKRREKIHVKENNALCPAISIGNECPYKENCKFPHDVEAYLATKAPDIGDKCPIFERYGVCPAGFKCRWLAGHVVINADGKYELIKKPDGQFTLFTVNTVGKEVQRKLRTKQLDLSKAESIISAVLGEEKPDPSSKVSNIPEENRDATSAISEGKETESVSLEETGVLKNQTVSVNVDLKEISSQARSNIALPTLRPQEKNLIDWRDRKILAPLTTVGNPPFRRLCGSLGADTFYSEMAMCYPLMQGHQPEWALVRGLNYEREMMRGGRRGILGVQLATGKLWQATKTAQVIAEQCDGVDFLDLNCGCPIDLVFRQGAGSSLLENPGRLLRNLQGMDAVSGQIPVTVKLRMGNKDDHPVVKNLIGRIFNETNTSAATLHGRSRQQRYSKNANWDYIGEIASKVKSMNERIDELPEDSLRTQPLSLIGNGDCYSWQDWYDGVNKGVDTVMIARGALVKPWIFEEIEARQFIDKSSTQRLEMLEQYCNNGLEYWGSDSQGVNTTRRFFLEFMSFFHRYTPIALYEVQRPRLNDRPPLYTARDEMETLLASNKVTDWVKLSEFFLGPTPERFTFTPKHKSNSVEEAEG</sequence>
<comment type="function">
    <text evidence="6">Catalyzes the synthesis of dihydrouridine, a modified base, in various RNAs, such as tRNAs and mRNAs (PubMed:34798057). Modifies the uridine in position 47 (U47) in the D-loop of tRNAs (PubMed:34798057). Also able to mediate formation of dihydrouridine outside of the D-loop of tRNAs (PubMed:34798057). Catalyzes the synthesis of dihydrouridine in some mRNAs, thereby affecting their translation (PubMed:34798057). Dus3-mediated dihydrouridylation of the mRNA encoding alpha-tubulin nda2 is required for meiotic chromosome segregation (PubMed:34798057).</text>
</comment>
<comment type="catalytic activity">
    <reaction evidence="1">
        <text>5,6-dihydrouridine(47) in tRNA + NAD(+) = uridine(47) in tRNA + NADH + H(+)</text>
        <dbReference type="Rhea" id="RHEA:53364"/>
        <dbReference type="Rhea" id="RHEA-COMP:13539"/>
        <dbReference type="Rhea" id="RHEA-COMP:13540"/>
        <dbReference type="ChEBI" id="CHEBI:15378"/>
        <dbReference type="ChEBI" id="CHEBI:57540"/>
        <dbReference type="ChEBI" id="CHEBI:57945"/>
        <dbReference type="ChEBI" id="CHEBI:65315"/>
        <dbReference type="ChEBI" id="CHEBI:74443"/>
        <dbReference type="EC" id="1.3.1.89"/>
    </reaction>
    <physiologicalReaction direction="right-to-left" evidence="1">
        <dbReference type="Rhea" id="RHEA:53366"/>
    </physiologicalReaction>
</comment>
<comment type="catalytic activity">
    <reaction evidence="1">
        <text>5,6-dihydrouridine(47) in tRNA + NADP(+) = uridine(47) in tRNA + NADPH + H(+)</text>
        <dbReference type="Rhea" id="RHEA:53360"/>
        <dbReference type="Rhea" id="RHEA-COMP:13539"/>
        <dbReference type="Rhea" id="RHEA-COMP:13540"/>
        <dbReference type="ChEBI" id="CHEBI:15378"/>
        <dbReference type="ChEBI" id="CHEBI:57783"/>
        <dbReference type="ChEBI" id="CHEBI:58349"/>
        <dbReference type="ChEBI" id="CHEBI:65315"/>
        <dbReference type="ChEBI" id="CHEBI:74443"/>
        <dbReference type="EC" id="1.3.1.89"/>
    </reaction>
    <physiologicalReaction direction="right-to-left" evidence="1">
        <dbReference type="Rhea" id="RHEA:53362"/>
    </physiologicalReaction>
</comment>
<comment type="catalytic activity">
    <reaction evidence="6">
        <text>a 5,6-dihydrouridine in mRNA + NAD(+) = a uridine in mRNA + NADH + H(+)</text>
        <dbReference type="Rhea" id="RHEA:69851"/>
        <dbReference type="Rhea" id="RHEA-COMP:14658"/>
        <dbReference type="Rhea" id="RHEA-COMP:17789"/>
        <dbReference type="ChEBI" id="CHEBI:15378"/>
        <dbReference type="ChEBI" id="CHEBI:57540"/>
        <dbReference type="ChEBI" id="CHEBI:57945"/>
        <dbReference type="ChEBI" id="CHEBI:65315"/>
        <dbReference type="ChEBI" id="CHEBI:74443"/>
    </reaction>
    <physiologicalReaction direction="right-to-left" evidence="6">
        <dbReference type="Rhea" id="RHEA:69853"/>
    </physiologicalReaction>
</comment>
<comment type="catalytic activity">
    <reaction evidence="6">
        <text>a 5,6-dihydrouridine in mRNA + NADP(+) = a uridine in mRNA + NADPH + H(+)</text>
        <dbReference type="Rhea" id="RHEA:69855"/>
        <dbReference type="Rhea" id="RHEA-COMP:14658"/>
        <dbReference type="Rhea" id="RHEA-COMP:17789"/>
        <dbReference type="ChEBI" id="CHEBI:15378"/>
        <dbReference type="ChEBI" id="CHEBI:57783"/>
        <dbReference type="ChEBI" id="CHEBI:58349"/>
        <dbReference type="ChEBI" id="CHEBI:65315"/>
        <dbReference type="ChEBI" id="CHEBI:74443"/>
    </reaction>
    <physiologicalReaction direction="right-to-left" evidence="6">
        <dbReference type="Rhea" id="RHEA:69857"/>
    </physiologicalReaction>
</comment>
<comment type="cofactor">
    <cofactor evidence="2">
        <name>FMN</name>
        <dbReference type="ChEBI" id="CHEBI:58210"/>
    </cofactor>
</comment>
<comment type="subcellular location">
    <subcellularLocation>
        <location evidence="1">Cytoplasm</location>
    </subcellularLocation>
    <subcellularLocation>
        <location evidence="5">Nucleus</location>
    </subcellularLocation>
</comment>
<comment type="disruption phenotype">
    <text evidence="6">Decreased ability to complete gametogenesis.</text>
</comment>
<comment type="similarity">
    <text evidence="8">Belongs to the Dus family. Dus3 subfamily.</text>
</comment>
<protein>
    <recommendedName>
        <fullName>tRNA-dihydrouridine(47) synthase [NAD(P)(+)]</fullName>
        <ecNumber evidence="1">1.3.1.89</ecNumber>
    </recommendedName>
    <alternativeName>
        <fullName evidence="8">mRNA-dihydrouridine synthase dus3</fullName>
        <ecNumber evidence="6">1.3.1.-</ecNumber>
    </alternativeName>
    <alternativeName>
        <fullName>tRNA-dihydrouridine synthase 3</fullName>
    </alternativeName>
</protein>
<accession>Q9UTH9</accession>
<gene>
    <name evidence="7 9" type="primary">dus3</name>
    <name type="ORF">SPAC16.04</name>
</gene>
<name>DUS3_SCHPO</name>
<feature type="chain" id="PRO_0000316227" description="tRNA-dihydrouridine(47) synthase [NAD(P)(+)]">
    <location>
        <begin position="1"/>
        <end position="617"/>
    </location>
</feature>
<feature type="zinc finger region" description="C3H1-type" evidence="3">
    <location>
        <begin position="42"/>
        <end position="70"/>
    </location>
</feature>
<feature type="region of interest" description="Disordered" evidence="4">
    <location>
        <begin position="160"/>
        <end position="193"/>
    </location>
</feature>
<feature type="active site" description="Proton donor" evidence="2">
    <location>
        <position position="340"/>
    </location>
</feature>
<feature type="binding site" evidence="2">
    <location>
        <begin position="245"/>
        <end position="247"/>
    </location>
    <ligand>
        <name>FMN</name>
        <dbReference type="ChEBI" id="CHEBI:58210"/>
    </ligand>
</feature>
<feature type="binding site" evidence="2">
    <location>
        <position position="308"/>
    </location>
    <ligand>
        <name>FMN</name>
        <dbReference type="ChEBI" id="CHEBI:58210"/>
    </ligand>
</feature>
<feature type="binding site" evidence="2">
    <location>
        <position position="380"/>
    </location>
    <ligand>
        <name>FMN</name>
        <dbReference type="ChEBI" id="CHEBI:58210"/>
    </ligand>
</feature>
<feature type="binding site" evidence="2">
    <location>
        <position position="411"/>
    </location>
    <ligand>
        <name>FMN</name>
        <dbReference type="ChEBI" id="CHEBI:58210"/>
    </ligand>
</feature>
<feature type="binding site" evidence="2">
    <location>
        <begin position="460"/>
        <end position="462"/>
    </location>
    <ligand>
        <name>FMN</name>
        <dbReference type="ChEBI" id="CHEBI:58210"/>
    </ligand>
</feature>
<feature type="binding site" evidence="2">
    <location>
        <begin position="483"/>
        <end position="484"/>
    </location>
    <ligand>
        <name>FMN</name>
        <dbReference type="ChEBI" id="CHEBI:58210"/>
    </ligand>
</feature>
<proteinExistence type="evidence at protein level"/>
<reference key="1">
    <citation type="journal article" date="2002" name="Nature">
        <title>The genome sequence of Schizosaccharomyces pombe.</title>
        <authorList>
            <person name="Wood V."/>
            <person name="Gwilliam R."/>
            <person name="Rajandream M.A."/>
            <person name="Lyne M.H."/>
            <person name="Lyne R."/>
            <person name="Stewart A."/>
            <person name="Sgouros J.G."/>
            <person name="Peat N."/>
            <person name="Hayles J."/>
            <person name="Baker S.G."/>
            <person name="Basham D."/>
            <person name="Bowman S."/>
            <person name="Brooks K."/>
            <person name="Brown D."/>
            <person name="Brown S."/>
            <person name="Chillingworth T."/>
            <person name="Churcher C.M."/>
            <person name="Collins M."/>
            <person name="Connor R."/>
            <person name="Cronin A."/>
            <person name="Davis P."/>
            <person name="Feltwell T."/>
            <person name="Fraser A."/>
            <person name="Gentles S."/>
            <person name="Goble A."/>
            <person name="Hamlin N."/>
            <person name="Harris D.E."/>
            <person name="Hidalgo J."/>
            <person name="Hodgson G."/>
            <person name="Holroyd S."/>
            <person name="Hornsby T."/>
            <person name="Howarth S."/>
            <person name="Huckle E.J."/>
            <person name="Hunt S."/>
            <person name="Jagels K."/>
            <person name="James K.D."/>
            <person name="Jones L."/>
            <person name="Jones M."/>
            <person name="Leather S."/>
            <person name="McDonald S."/>
            <person name="McLean J."/>
            <person name="Mooney P."/>
            <person name="Moule S."/>
            <person name="Mungall K.L."/>
            <person name="Murphy L.D."/>
            <person name="Niblett D."/>
            <person name="Odell C."/>
            <person name="Oliver K."/>
            <person name="O'Neil S."/>
            <person name="Pearson D."/>
            <person name="Quail M.A."/>
            <person name="Rabbinowitsch E."/>
            <person name="Rutherford K.M."/>
            <person name="Rutter S."/>
            <person name="Saunders D."/>
            <person name="Seeger K."/>
            <person name="Sharp S."/>
            <person name="Skelton J."/>
            <person name="Simmonds M.N."/>
            <person name="Squares R."/>
            <person name="Squares S."/>
            <person name="Stevens K."/>
            <person name="Taylor K."/>
            <person name="Taylor R.G."/>
            <person name="Tivey A."/>
            <person name="Walsh S.V."/>
            <person name="Warren T."/>
            <person name="Whitehead S."/>
            <person name="Woodward J.R."/>
            <person name="Volckaert G."/>
            <person name="Aert R."/>
            <person name="Robben J."/>
            <person name="Grymonprez B."/>
            <person name="Weltjens I."/>
            <person name="Vanstreels E."/>
            <person name="Rieger M."/>
            <person name="Schaefer M."/>
            <person name="Mueller-Auer S."/>
            <person name="Gabel C."/>
            <person name="Fuchs M."/>
            <person name="Duesterhoeft A."/>
            <person name="Fritzc C."/>
            <person name="Holzer E."/>
            <person name="Moestl D."/>
            <person name="Hilbert H."/>
            <person name="Borzym K."/>
            <person name="Langer I."/>
            <person name="Beck A."/>
            <person name="Lehrach H."/>
            <person name="Reinhardt R."/>
            <person name="Pohl T.M."/>
            <person name="Eger P."/>
            <person name="Zimmermann W."/>
            <person name="Wedler H."/>
            <person name="Wambutt R."/>
            <person name="Purnelle B."/>
            <person name="Goffeau A."/>
            <person name="Cadieu E."/>
            <person name="Dreano S."/>
            <person name="Gloux S."/>
            <person name="Lelaure V."/>
            <person name="Mottier S."/>
            <person name="Galibert F."/>
            <person name="Aves S.J."/>
            <person name="Xiang Z."/>
            <person name="Hunt C."/>
            <person name="Moore K."/>
            <person name="Hurst S.M."/>
            <person name="Lucas M."/>
            <person name="Rochet M."/>
            <person name="Gaillardin C."/>
            <person name="Tallada V.A."/>
            <person name="Garzon A."/>
            <person name="Thode G."/>
            <person name="Daga R.R."/>
            <person name="Cruzado L."/>
            <person name="Jimenez J."/>
            <person name="Sanchez M."/>
            <person name="del Rey F."/>
            <person name="Benito J."/>
            <person name="Dominguez A."/>
            <person name="Revuelta J.L."/>
            <person name="Moreno S."/>
            <person name="Armstrong J."/>
            <person name="Forsburg S.L."/>
            <person name="Cerutti L."/>
            <person name="Lowe T."/>
            <person name="McCombie W.R."/>
            <person name="Paulsen I."/>
            <person name="Potashkin J."/>
            <person name="Shpakovski G.V."/>
            <person name="Ussery D."/>
            <person name="Barrell B.G."/>
            <person name="Nurse P."/>
        </authorList>
    </citation>
    <scope>NUCLEOTIDE SEQUENCE [LARGE SCALE GENOMIC DNA]</scope>
    <source>
        <strain>972 / ATCC 24843</strain>
    </source>
</reference>
<reference key="2">
    <citation type="journal article" date="2006" name="Nat. Biotechnol.">
        <title>ORFeome cloning and global analysis of protein localization in the fission yeast Schizosaccharomyces pombe.</title>
        <authorList>
            <person name="Matsuyama A."/>
            <person name="Arai R."/>
            <person name="Yashiroda Y."/>
            <person name="Shirai A."/>
            <person name="Kamata A."/>
            <person name="Sekido S."/>
            <person name="Kobayashi Y."/>
            <person name="Hashimoto A."/>
            <person name="Hamamoto M."/>
            <person name="Hiraoka Y."/>
            <person name="Horinouchi S."/>
            <person name="Yoshida M."/>
        </authorList>
    </citation>
    <scope>SUBCELLULAR LOCATION [LARGE SCALE ANALYSIS]</scope>
</reference>
<reference key="3">
    <citation type="journal article" date="2021" name="Mol. Cell">
        <title>Transcription-wide mapping of dihydrouridine reveals that mRNA dihydrouridylation is required for meiotic chromosome segregation.</title>
        <authorList>
            <person name="Finet O."/>
            <person name="Yague-Sanz C."/>
            <person name="Krueger L.K."/>
            <person name="Tran P."/>
            <person name="Migeot V."/>
            <person name="Louski M."/>
            <person name="Nevers A."/>
            <person name="Rougemaille M."/>
            <person name="Sun J."/>
            <person name="Ernst F.G.M."/>
            <person name="Wacheul L."/>
            <person name="Wery M."/>
            <person name="Morillon A."/>
            <person name="Dedon P."/>
            <person name="Lafontaine D.L.J."/>
            <person name="Hermand D."/>
        </authorList>
    </citation>
    <scope>FUNCTION</scope>
    <scope>CATALYTIC ACTIVITY</scope>
    <scope>DISRUPTION PHENOTYPE</scope>
</reference>
<keyword id="KW-0963">Cytoplasm</keyword>
<keyword id="KW-0285">Flavoprotein</keyword>
<keyword id="KW-0288">FMN</keyword>
<keyword id="KW-0479">Metal-binding</keyword>
<keyword id="KW-0507">mRNA processing</keyword>
<keyword id="KW-0520">NAD</keyword>
<keyword id="KW-0521">NADP</keyword>
<keyword id="KW-0539">Nucleus</keyword>
<keyword id="KW-0560">Oxidoreductase</keyword>
<keyword id="KW-1185">Reference proteome</keyword>
<keyword id="KW-0819">tRNA processing</keyword>
<keyword id="KW-0862">Zinc</keyword>
<keyword id="KW-0863">Zinc-finger</keyword>
<organism>
    <name type="scientific">Schizosaccharomyces pombe (strain 972 / ATCC 24843)</name>
    <name type="common">Fission yeast</name>
    <dbReference type="NCBI Taxonomy" id="284812"/>
    <lineage>
        <taxon>Eukaryota</taxon>
        <taxon>Fungi</taxon>
        <taxon>Dikarya</taxon>
        <taxon>Ascomycota</taxon>
        <taxon>Taphrinomycotina</taxon>
        <taxon>Schizosaccharomycetes</taxon>
        <taxon>Schizosaccharomycetales</taxon>
        <taxon>Schizosaccharomycetaceae</taxon>
        <taxon>Schizosaccharomyces</taxon>
    </lineage>
</organism>
<evidence type="ECO:0000250" key="1">
    <source>
        <dbReference type="UniProtKB" id="Q06053"/>
    </source>
</evidence>
<evidence type="ECO:0000250" key="2">
    <source>
        <dbReference type="UniProtKB" id="Q5SMC7"/>
    </source>
</evidence>
<evidence type="ECO:0000255" key="3">
    <source>
        <dbReference type="PROSITE-ProRule" id="PRU00723"/>
    </source>
</evidence>
<evidence type="ECO:0000256" key="4">
    <source>
        <dbReference type="SAM" id="MobiDB-lite"/>
    </source>
</evidence>
<evidence type="ECO:0000269" key="5">
    <source>
    </source>
</evidence>
<evidence type="ECO:0000269" key="6">
    <source>
    </source>
</evidence>
<evidence type="ECO:0000303" key="7">
    <source>
    </source>
</evidence>
<evidence type="ECO:0000305" key="8"/>
<evidence type="ECO:0000312" key="9">
    <source>
        <dbReference type="PomBase" id="SPAC16.04"/>
    </source>
</evidence>
<dbReference type="EC" id="1.3.1.89" evidence="1"/>
<dbReference type="EC" id="1.3.1.-" evidence="6"/>
<dbReference type="EMBL" id="CU329670">
    <property type="protein sequence ID" value="CAB57402.1"/>
    <property type="molecule type" value="Genomic_DNA"/>
</dbReference>
<dbReference type="PIR" id="T37732">
    <property type="entry name" value="T37732"/>
</dbReference>
<dbReference type="RefSeq" id="NP_594572.1">
    <property type="nucleotide sequence ID" value="NM_001020001.2"/>
</dbReference>
<dbReference type="SMR" id="Q9UTH9"/>
<dbReference type="BioGRID" id="278070">
    <property type="interactions" value="15"/>
</dbReference>
<dbReference type="FunCoup" id="Q9UTH9">
    <property type="interactions" value="504"/>
</dbReference>
<dbReference type="STRING" id="284812.Q9UTH9"/>
<dbReference type="iPTMnet" id="Q9UTH9"/>
<dbReference type="PaxDb" id="4896-SPAC16.04.1"/>
<dbReference type="EnsemblFungi" id="SPAC16.04.1">
    <property type="protein sequence ID" value="SPAC16.04.1:pep"/>
    <property type="gene ID" value="SPAC16.04"/>
</dbReference>
<dbReference type="GeneID" id="2541573"/>
<dbReference type="KEGG" id="spo:2541573"/>
<dbReference type="PomBase" id="SPAC16.04">
    <property type="gene designation" value="dus3"/>
</dbReference>
<dbReference type="VEuPathDB" id="FungiDB:SPAC16.04"/>
<dbReference type="eggNOG" id="KOG2333">
    <property type="taxonomic scope" value="Eukaryota"/>
</dbReference>
<dbReference type="HOGENOM" id="CLU_013299_7_0_1"/>
<dbReference type="InParanoid" id="Q9UTH9"/>
<dbReference type="OMA" id="WSYIAEC"/>
<dbReference type="PhylomeDB" id="Q9UTH9"/>
<dbReference type="PRO" id="PR:Q9UTH9"/>
<dbReference type="Proteomes" id="UP000002485">
    <property type="component" value="Chromosome I"/>
</dbReference>
<dbReference type="GO" id="GO:0005737">
    <property type="term" value="C:cytoplasm"/>
    <property type="evidence" value="ECO:0000266"/>
    <property type="project" value="PomBase"/>
</dbReference>
<dbReference type="GO" id="GO:0005634">
    <property type="term" value="C:nucleus"/>
    <property type="evidence" value="ECO:0007005"/>
    <property type="project" value="PomBase"/>
</dbReference>
<dbReference type="GO" id="GO:0050660">
    <property type="term" value="F:flavin adenine dinucleotide binding"/>
    <property type="evidence" value="ECO:0007669"/>
    <property type="project" value="InterPro"/>
</dbReference>
<dbReference type="GO" id="GO:0106414">
    <property type="term" value="F:mRNA dihydrouridine synthase activity"/>
    <property type="evidence" value="ECO:0007669"/>
    <property type="project" value="RHEA"/>
</dbReference>
<dbReference type="GO" id="GO:0017150">
    <property type="term" value="F:tRNA dihydrouridine synthase activity"/>
    <property type="evidence" value="ECO:0000318"/>
    <property type="project" value="GO_Central"/>
</dbReference>
<dbReference type="GO" id="GO:0102265">
    <property type="term" value="F:tRNA-dihydrouridine47 synthase activity"/>
    <property type="evidence" value="ECO:0007669"/>
    <property type="project" value="UniProtKB-EC"/>
</dbReference>
<dbReference type="GO" id="GO:0008270">
    <property type="term" value="F:zinc ion binding"/>
    <property type="evidence" value="ECO:0007669"/>
    <property type="project" value="UniProtKB-KW"/>
</dbReference>
<dbReference type="GO" id="GO:0006397">
    <property type="term" value="P:mRNA processing"/>
    <property type="evidence" value="ECO:0007669"/>
    <property type="project" value="UniProtKB-KW"/>
</dbReference>
<dbReference type="CDD" id="cd02801">
    <property type="entry name" value="DUS_like_FMN"/>
    <property type="match status" value="1"/>
</dbReference>
<dbReference type="Gene3D" id="3.20.20.70">
    <property type="entry name" value="Aldolase class I"/>
    <property type="match status" value="1"/>
</dbReference>
<dbReference type="Gene3D" id="4.10.1000.10">
    <property type="entry name" value="Zinc finger, CCCH-type"/>
    <property type="match status" value="1"/>
</dbReference>
<dbReference type="InterPro" id="IPR013785">
    <property type="entry name" value="Aldolase_TIM"/>
</dbReference>
<dbReference type="InterPro" id="IPR035587">
    <property type="entry name" value="DUS-like_FMN-bd"/>
</dbReference>
<dbReference type="InterPro" id="IPR018517">
    <property type="entry name" value="tRNA_hU_synthase_CS"/>
</dbReference>
<dbReference type="InterPro" id="IPR000571">
    <property type="entry name" value="Znf_CCCH"/>
</dbReference>
<dbReference type="PANTHER" id="PTHR45846">
    <property type="entry name" value="TRNA-DIHYDROURIDINE(47) SYNTHASE [NAD(P)(+)]-LIKE"/>
    <property type="match status" value="1"/>
</dbReference>
<dbReference type="PANTHER" id="PTHR45846:SF1">
    <property type="entry name" value="TRNA-DIHYDROURIDINE(47) SYNTHASE [NAD(P)(+)]-LIKE"/>
    <property type="match status" value="1"/>
</dbReference>
<dbReference type="Pfam" id="PF01207">
    <property type="entry name" value="Dus"/>
    <property type="match status" value="1"/>
</dbReference>
<dbReference type="SUPFAM" id="SSF51395">
    <property type="entry name" value="FMN-linked oxidoreductases"/>
    <property type="match status" value="1"/>
</dbReference>
<dbReference type="PROSITE" id="PS01136">
    <property type="entry name" value="UPF0034"/>
    <property type="match status" value="1"/>
</dbReference>
<dbReference type="PROSITE" id="PS50103">
    <property type="entry name" value="ZF_C3H1"/>
    <property type="match status" value="1"/>
</dbReference>